<keyword id="KW-1003">Cell membrane</keyword>
<keyword id="KW-0175">Coiled coil</keyword>
<keyword id="KW-0963">Cytoplasm</keyword>
<keyword id="KW-0472">Membrane</keyword>
<keyword id="KW-1185">Reference proteome</keyword>
<keyword id="KW-0813">Transport</keyword>
<feature type="chain" id="PRO_0000263708" description="Syntaxin-19">
    <location>
        <begin position="1"/>
        <end position="292"/>
    </location>
</feature>
<feature type="domain" description="t-SNARE coiled-coil homology" evidence="3">
    <location>
        <begin position="209"/>
        <end position="271"/>
    </location>
</feature>
<feature type="region of interest" description="Disordered" evidence="4">
    <location>
        <begin position="1"/>
        <end position="28"/>
    </location>
</feature>
<feature type="coiled-coil region" evidence="2">
    <location>
        <begin position="46"/>
        <end position="122"/>
    </location>
</feature>
<feature type="compositionally biased region" description="Basic and acidic residues" evidence="4">
    <location>
        <begin position="1"/>
        <end position="24"/>
    </location>
</feature>
<organism>
    <name type="scientific">Bos taurus</name>
    <name type="common">Bovine</name>
    <dbReference type="NCBI Taxonomy" id="9913"/>
    <lineage>
        <taxon>Eukaryota</taxon>
        <taxon>Metazoa</taxon>
        <taxon>Chordata</taxon>
        <taxon>Craniata</taxon>
        <taxon>Vertebrata</taxon>
        <taxon>Euteleostomi</taxon>
        <taxon>Mammalia</taxon>
        <taxon>Eutheria</taxon>
        <taxon>Laurasiatheria</taxon>
        <taxon>Artiodactyla</taxon>
        <taxon>Ruminantia</taxon>
        <taxon>Pecora</taxon>
        <taxon>Bovidae</taxon>
        <taxon>Bovinae</taxon>
        <taxon>Bos</taxon>
    </lineage>
</organism>
<comment type="function">
    <text evidence="1">Plays a role in endosomal trafficking of the epidermal growth factor receptor (EGFR).</text>
</comment>
<comment type="subunit">
    <text evidence="1">Interacts with EGFR.</text>
</comment>
<comment type="subcellular location">
    <subcellularLocation>
        <location evidence="1">Cell membrane</location>
        <topology evidence="1">Peripheral membrane protein</topology>
    </subcellularLocation>
    <subcellularLocation>
        <location evidence="1">Cytoplasm</location>
    </subcellularLocation>
</comment>
<comment type="similarity">
    <text evidence="5">Belongs to the syntaxin family.</text>
</comment>
<accession>Q0VCI2</accession>
<reference key="1">
    <citation type="submission" date="2006-08" db="EMBL/GenBank/DDBJ databases">
        <authorList>
            <consortium name="NIH - Mammalian Gene Collection (MGC) project"/>
        </authorList>
    </citation>
    <scope>NUCLEOTIDE SEQUENCE [LARGE SCALE MRNA]</scope>
    <source>
        <strain>Hereford</strain>
        <tissue>Fetal lung</tissue>
    </source>
</reference>
<name>STX19_BOVIN</name>
<proteinExistence type="evidence at transcript level"/>
<gene>
    <name type="primary">STX19</name>
</gene>
<dbReference type="EMBL" id="BC120154">
    <property type="protein sequence ID" value="AAI20155.1"/>
    <property type="molecule type" value="mRNA"/>
</dbReference>
<dbReference type="RefSeq" id="NP_001069140.1">
    <property type="nucleotide sequence ID" value="NM_001075672.2"/>
</dbReference>
<dbReference type="RefSeq" id="XP_010799272.1">
    <property type="nucleotide sequence ID" value="XM_010800970.2"/>
</dbReference>
<dbReference type="SMR" id="Q0VCI2"/>
<dbReference type="FunCoup" id="Q0VCI2">
    <property type="interactions" value="109"/>
</dbReference>
<dbReference type="STRING" id="9913.ENSBTAP00000006804"/>
<dbReference type="PaxDb" id="9913-ENSBTAP00000006804"/>
<dbReference type="Ensembl" id="ENSBTAT00000006804.5">
    <property type="protein sequence ID" value="ENSBTAP00000006804.3"/>
    <property type="gene ID" value="ENSBTAG00000005162.5"/>
</dbReference>
<dbReference type="Ensembl" id="ENSBTAT00000089636.1">
    <property type="protein sequence ID" value="ENSBTAP00000076881.1"/>
    <property type="gene ID" value="ENSBTAG00000005162.5"/>
</dbReference>
<dbReference type="GeneID" id="514487"/>
<dbReference type="KEGG" id="bta:514487"/>
<dbReference type="CTD" id="415117"/>
<dbReference type="VEuPathDB" id="HostDB:ENSBTAG00000005162"/>
<dbReference type="VGNC" id="VGNC:35435">
    <property type="gene designation" value="STX19"/>
</dbReference>
<dbReference type="eggNOG" id="KOG0810">
    <property type="taxonomic scope" value="Eukaryota"/>
</dbReference>
<dbReference type="GeneTree" id="ENSGT01050000244948"/>
<dbReference type="HOGENOM" id="CLU_042423_2_0_1"/>
<dbReference type="InParanoid" id="Q0VCI2"/>
<dbReference type="OMA" id="CKAICCW"/>
<dbReference type="OrthoDB" id="10255013at2759"/>
<dbReference type="TreeFam" id="TF313763"/>
<dbReference type="Proteomes" id="UP000009136">
    <property type="component" value="Chromosome 1"/>
</dbReference>
<dbReference type="Bgee" id="ENSBTAG00000005162">
    <property type="expression patterns" value="Expressed in prostate gland and 59 other cell types or tissues"/>
</dbReference>
<dbReference type="GO" id="GO:0012505">
    <property type="term" value="C:endomembrane system"/>
    <property type="evidence" value="ECO:0000318"/>
    <property type="project" value="GO_Central"/>
</dbReference>
<dbReference type="GO" id="GO:0005886">
    <property type="term" value="C:plasma membrane"/>
    <property type="evidence" value="ECO:0000318"/>
    <property type="project" value="GO_Central"/>
</dbReference>
<dbReference type="GO" id="GO:0048787">
    <property type="term" value="C:presynaptic active zone membrane"/>
    <property type="evidence" value="ECO:0000318"/>
    <property type="project" value="GO_Central"/>
</dbReference>
<dbReference type="GO" id="GO:0031201">
    <property type="term" value="C:SNARE complex"/>
    <property type="evidence" value="ECO:0000318"/>
    <property type="project" value="GO_Central"/>
</dbReference>
<dbReference type="GO" id="GO:0005484">
    <property type="term" value="F:SNAP receptor activity"/>
    <property type="evidence" value="ECO:0000318"/>
    <property type="project" value="GO_Central"/>
</dbReference>
<dbReference type="GO" id="GO:0000149">
    <property type="term" value="F:SNARE binding"/>
    <property type="evidence" value="ECO:0000318"/>
    <property type="project" value="GO_Central"/>
</dbReference>
<dbReference type="GO" id="GO:0006887">
    <property type="term" value="P:exocytosis"/>
    <property type="evidence" value="ECO:0000318"/>
    <property type="project" value="GO_Central"/>
</dbReference>
<dbReference type="GO" id="GO:0006886">
    <property type="term" value="P:intracellular protein transport"/>
    <property type="evidence" value="ECO:0000318"/>
    <property type="project" value="GO_Central"/>
</dbReference>
<dbReference type="GO" id="GO:0031629">
    <property type="term" value="P:synaptic vesicle fusion to presynaptic active zone membrane"/>
    <property type="evidence" value="ECO:0000318"/>
    <property type="project" value="GO_Central"/>
</dbReference>
<dbReference type="GO" id="GO:0048278">
    <property type="term" value="P:vesicle docking"/>
    <property type="evidence" value="ECO:0000318"/>
    <property type="project" value="GO_Central"/>
</dbReference>
<dbReference type="CDD" id="cd00179">
    <property type="entry name" value="SynN"/>
    <property type="match status" value="1"/>
</dbReference>
<dbReference type="FunFam" id="1.20.5.110:FF:000022">
    <property type="entry name" value="Syntaxin 19"/>
    <property type="match status" value="1"/>
</dbReference>
<dbReference type="FunFam" id="1.20.58.70:FF:000017">
    <property type="entry name" value="Syntaxin 19"/>
    <property type="match status" value="1"/>
</dbReference>
<dbReference type="Gene3D" id="1.20.5.110">
    <property type="match status" value="1"/>
</dbReference>
<dbReference type="Gene3D" id="1.20.58.70">
    <property type="match status" value="1"/>
</dbReference>
<dbReference type="InterPro" id="IPR010989">
    <property type="entry name" value="SNARE"/>
</dbReference>
<dbReference type="InterPro" id="IPR045242">
    <property type="entry name" value="Syntaxin"/>
</dbReference>
<dbReference type="InterPro" id="IPR006012">
    <property type="entry name" value="Syntaxin/epimorphin_CS"/>
</dbReference>
<dbReference type="InterPro" id="IPR006011">
    <property type="entry name" value="Syntaxin_N"/>
</dbReference>
<dbReference type="InterPro" id="IPR000727">
    <property type="entry name" value="T_SNARE_dom"/>
</dbReference>
<dbReference type="PANTHER" id="PTHR19957">
    <property type="entry name" value="SYNTAXIN"/>
    <property type="match status" value="1"/>
</dbReference>
<dbReference type="PANTHER" id="PTHR19957:SF29">
    <property type="entry name" value="SYNTAXIN-19"/>
    <property type="match status" value="1"/>
</dbReference>
<dbReference type="Pfam" id="PF00804">
    <property type="entry name" value="Syntaxin"/>
    <property type="match status" value="1"/>
</dbReference>
<dbReference type="SMART" id="SM00397">
    <property type="entry name" value="t_SNARE"/>
    <property type="match status" value="1"/>
</dbReference>
<dbReference type="SUPFAM" id="SSF47661">
    <property type="entry name" value="t-snare proteins"/>
    <property type="match status" value="1"/>
</dbReference>
<dbReference type="PROSITE" id="PS00914">
    <property type="entry name" value="SYNTAXIN"/>
    <property type="match status" value="1"/>
</dbReference>
<dbReference type="PROSITE" id="PS50192">
    <property type="entry name" value="T_SNARE"/>
    <property type="match status" value="1"/>
</dbReference>
<protein>
    <recommendedName>
        <fullName>Syntaxin-19</fullName>
    </recommendedName>
</protein>
<evidence type="ECO:0000250" key="1">
    <source>
        <dbReference type="UniProtKB" id="Q8R1Q0"/>
    </source>
</evidence>
<evidence type="ECO:0000255" key="2"/>
<evidence type="ECO:0000255" key="3">
    <source>
        <dbReference type="PROSITE-ProRule" id="PRU00202"/>
    </source>
</evidence>
<evidence type="ECO:0000256" key="4">
    <source>
        <dbReference type="SAM" id="MobiDB-lite"/>
    </source>
</evidence>
<evidence type="ECO:0000305" key="5"/>
<sequence length="292" mass="33890">MKDRLPELKQRTKETELSKDKDVPTTEAEEQGVFLQQAVIYEREPVAERHLHEIQKLQESINNLTDNVQKFGQQQKSLVASMRRFSLLKKESSIAKEIKIQAEHINRGLDDLVKEVKKSEDESGPSSVVTRILKFQHAAMFRHFQQTMFTYNDTIAAKQEKCRTFIFRQLEVAGKELPEEEVNDMLHQGKWEVFNESLLTEISITKAQLSEIEQRHKELVNLENQIKDLRDLFIQISLLVEEQGESVNSIEMIVNGTKEYVNTTKEKFGLAVKYKKRNPCKILCCWCCPCCG</sequence>